<reference key="1">
    <citation type="submission" date="2008-02" db="EMBL/GenBank/DDBJ databases">
        <title>Zygosaccharomyces rouxii homologs of Saccharomyces cerevisiae chromosome III.</title>
        <authorList>
            <person name="Gordon J.L."/>
            <person name="Wolfe K.H."/>
        </authorList>
    </citation>
    <scope>NUCLEOTIDE SEQUENCE [LARGE SCALE GENOMIC DNA]</scope>
    <source>
        <strain>ATCC 2623 / CBS 732 / BCRC 21506 / NBRC 1130 / NCYC 568 / NRRL Y-229</strain>
    </source>
</reference>
<reference key="2">
    <citation type="journal article" date="2009" name="Genome Res.">
        <title>Comparative genomics of protoploid Saccharomycetaceae.</title>
        <authorList>
            <consortium name="The Genolevures Consortium"/>
            <person name="Souciet J.-L."/>
            <person name="Dujon B."/>
            <person name="Gaillardin C."/>
            <person name="Johnston M."/>
            <person name="Baret P.V."/>
            <person name="Cliften P."/>
            <person name="Sherman D.J."/>
            <person name="Weissenbach J."/>
            <person name="Westhof E."/>
            <person name="Wincker P."/>
            <person name="Jubin C."/>
            <person name="Poulain J."/>
            <person name="Barbe V."/>
            <person name="Segurens B."/>
            <person name="Artiguenave F."/>
            <person name="Anthouard V."/>
            <person name="Vacherie B."/>
            <person name="Val M.-E."/>
            <person name="Fulton R.S."/>
            <person name="Minx P."/>
            <person name="Wilson R."/>
            <person name="Durrens P."/>
            <person name="Jean G."/>
            <person name="Marck C."/>
            <person name="Martin T."/>
            <person name="Nikolski M."/>
            <person name="Rolland T."/>
            <person name="Seret M.-L."/>
            <person name="Casaregola S."/>
            <person name="Despons L."/>
            <person name="Fairhead C."/>
            <person name="Fischer G."/>
            <person name="Lafontaine I."/>
            <person name="Leh V."/>
            <person name="Lemaire M."/>
            <person name="de Montigny J."/>
            <person name="Neuveglise C."/>
            <person name="Thierry A."/>
            <person name="Blanc-Lenfle I."/>
            <person name="Bleykasten C."/>
            <person name="Diffels J."/>
            <person name="Fritsch E."/>
            <person name="Frangeul L."/>
            <person name="Goeffon A."/>
            <person name="Jauniaux N."/>
            <person name="Kachouri-Lafond R."/>
            <person name="Payen C."/>
            <person name="Potier S."/>
            <person name="Pribylova L."/>
            <person name="Ozanne C."/>
            <person name="Richard G.-F."/>
            <person name="Sacerdot C."/>
            <person name="Straub M.-L."/>
            <person name="Talla E."/>
        </authorList>
    </citation>
    <scope>NUCLEOTIDE SEQUENCE [LARGE SCALE GENOMIC DNA]</scope>
    <source>
        <strain>ATCC 2623 / CBS 732 / BCRC 21506 / NBRC 1130 / NCYC 568 / NRRL Y-229</strain>
    </source>
</reference>
<protein>
    <recommendedName>
        <fullName evidence="3">Outer kinetochore KNL1 complex subunit KRE28</fullName>
    </recommendedName>
    <alternativeName>
        <fullName>Spindle pole body component KRE28</fullName>
    </alternativeName>
</protein>
<evidence type="ECO:0000250" key="1">
    <source>
        <dbReference type="UniProtKB" id="Q04431"/>
    </source>
</evidence>
<evidence type="ECO:0000255" key="2"/>
<evidence type="ECO:0000305" key="3"/>
<dbReference type="EMBL" id="AM989980">
    <property type="protein sequence ID" value="CAQ43315.1"/>
    <property type="molecule type" value="Genomic_DNA"/>
</dbReference>
<dbReference type="EMBL" id="CU928178">
    <property type="protein sequence ID" value="CAR29059.1"/>
    <property type="molecule type" value="Genomic_DNA"/>
</dbReference>
<dbReference type="RefSeq" id="XP_002497992.1">
    <property type="nucleotide sequence ID" value="XM_002497947.1"/>
</dbReference>
<dbReference type="SMR" id="C5DZ48"/>
<dbReference type="FunCoup" id="C5DZ48">
    <property type="interactions" value="34"/>
</dbReference>
<dbReference type="STRING" id="559307.C5DZ48"/>
<dbReference type="GeneID" id="8205766"/>
<dbReference type="KEGG" id="zro:ZYRO0F18172g"/>
<dbReference type="HOGENOM" id="CLU_062083_0_0_1"/>
<dbReference type="InParanoid" id="C5DZ48"/>
<dbReference type="Proteomes" id="UP000008536">
    <property type="component" value="Chromosome F"/>
</dbReference>
<dbReference type="GO" id="GO:0000776">
    <property type="term" value="C:kinetochore"/>
    <property type="evidence" value="ECO:0000250"/>
    <property type="project" value="UniProtKB"/>
</dbReference>
<dbReference type="GO" id="GO:0180019">
    <property type="term" value="C:Knl1/Spc105 complex"/>
    <property type="evidence" value="ECO:0000250"/>
    <property type="project" value="UniProtKB"/>
</dbReference>
<dbReference type="GO" id="GO:0005634">
    <property type="term" value="C:nucleus"/>
    <property type="evidence" value="ECO:0007669"/>
    <property type="project" value="UniProtKB-SubCell"/>
</dbReference>
<dbReference type="GO" id="GO:0031619">
    <property type="term" value="P:homologous chromosome orientation in meiotic metaphase I"/>
    <property type="evidence" value="ECO:0000250"/>
    <property type="project" value="UniProtKB"/>
</dbReference>
<dbReference type="GO" id="GO:1905325">
    <property type="term" value="P:regulation of meiosis I spindle assembly checkpoint"/>
    <property type="evidence" value="ECO:0000250"/>
    <property type="project" value="UniProtKB"/>
</dbReference>
<dbReference type="InterPro" id="IPR031361">
    <property type="entry name" value="Kre28"/>
</dbReference>
<dbReference type="Pfam" id="PF17097">
    <property type="entry name" value="Kre28"/>
    <property type="match status" value="1"/>
</dbReference>
<keyword id="KW-0137">Centromere</keyword>
<keyword id="KW-0158">Chromosome</keyword>
<keyword id="KW-0175">Coiled coil</keyword>
<keyword id="KW-0995">Kinetochore</keyword>
<keyword id="KW-0539">Nucleus</keyword>
<keyword id="KW-1185">Reference proteome</keyword>
<gene>
    <name type="primary">KRE28</name>
    <name type="ordered locus">ZYRO0F18172g</name>
    <name type="ORF">Zrou_1p21</name>
</gene>
<accession>C5DZ48</accession>
<accession>B2G406</accession>
<feature type="chain" id="PRO_0000408570" description="Outer kinetochore KNL1 complex subunit KRE28">
    <location>
        <begin position="1"/>
        <end position="370"/>
    </location>
</feature>
<feature type="coiled-coil region" evidence="2">
    <location>
        <begin position="115"/>
        <end position="249"/>
    </location>
</feature>
<organism>
    <name type="scientific">Zygosaccharomyces rouxii (strain ATCC 2623 / CBS 732 / NBRC 1130 / NCYC 568 / NRRL Y-229)</name>
    <dbReference type="NCBI Taxonomy" id="559307"/>
    <lineage>
        <taxon>Eukaryota</taxon>
        <taxon>Fungi</taxon>
        <taxon>Dikarya</taxon>
        <taxon>Ascomycota</taxon>
        <taxon>Saccharomycotina</taxon>
        <taxon>Saccharomycetes</taxon>
        <taxon>Saccharomycetales</taxon>
        <taxon>Saccharomycetaceae</taxon>
        <taxon>Zygosaccharomyces</taxon>
    </lineage>
</organism>
<name>ZWINT_ZYGRC</name>
<sequence>MKSDLDGYEVRIKSLENQTAHYSEQALLEQEQRVLASLREITQNVIAMGQENSLVEIKGELESKEESELVIDPSGFQEKIDTFVELVELLKVTHLEQETLDNFLRYTISSSNLLQINSVQDAKYVELESQVKELEQGTLESHKREIEATKGQIKNLCQELSMAQDSINETFLDTSNALEECDALLNELTQLRMEKQTSEEADTIEDDPVSQTYEDWESLQKSKLELRLLEEETSRLQSRVESYEDYQKRSRQLSNNDPRMLQNHKALELLVELWMTKFLPQPGISHLELFPQSRKFQFDVEPTFTVVITLADQTTFQNVQVYRKDAKSLVMDHGLNDEIKNSYLGTNNIYNGLNDIIHTLQRRVQAKGSN</sequence>
<proteinExistence type="inferred from homology"/>
<comment type="function">
    <text evidence="1">Acts as a component of the outer kinetochore KNL1 complex that facilitates microtubule-kinetochore interactions and the spindle assembly checkpoint. Kinetochores, consisting of a centromere-associated inner segment and a microtubule-contacting outer segment, play a crucial role in chromosome segregation by mediating the physical connection between centromeric DNA and spindle microtubules. The outer kinetochore is made up of the ten-subunit KMN network, comprising the MIS12, NDC80 and KNL1 complexes, and auxiliary microtubule-associated components; together they connect the outer kinetochore with the inner kinetochore, bind microtubules, and mediate interactions with mitotic checkpoint proteins that delay anaphase until chromosomes are bioriented on the spindle.</text>
</comment>
<comment type="subunit">
    <text evidence="1">Component of the KNL1/SPC105 complex composed of SPC105 and KRE28. Part of the ten-subunit outer kinetochore KMN network that includes the KNL1, MIS12 and NDC80 complexes.</text>
</comment>
<comment type="subcellular location">
    <subcellularLocation>
        <location evidence="1">Nucleus</location>
    </subcellularLocation>
    <subcellularLocation>
        <location evidence="1">Chromosome</location>
        <location evidence="1">Centromere</location>
        <location evidence="1">Kinetochore</location>
    </subcellularLocation>
</comment>
<comment type="similarity">
    <text evidence="3">Belongs to the KRE28 family.</text>
</comment>